<organism>
    <name type="scientific">Bradyrhizobium sp. (strain ORS 278)</name>
    <dbReference type="NCBI Taxonomy" id="114615"/>
    <lineage>
        <taxon>Bacteria</taxon>
        <taxon>Pseudomonadati</taxon>
        <taxon>Pseudomonadota</taxon>
        <taxon>Alphaproteobacteria</taxon>
        <taxon>Hyphomicrobiales</taxon>
        <taxon>Nitrobacteraceae</taxon>
        <taxon>Bradyrhizobium</taxon>
    </lineage>
</organism>
<evidence type="ECO:0000255" key="1">
    <source>
        <dbReference type="HAMAP-Rule" id="MF_00056"/>
    </source>
</evidence>
<gene>
    <name evidence="1" type="primary">kdsA</name>
    <name type="ordered locus">BRADO4101</name>
</gene>
<comment type="catalytic activity">
    <reaction evidence="1">
        <text>D-arabinose 5-phosphate + phosphoenolpyruvate + H2O = 3-deoxy-alpha-D-manno-2-octulosonate-8-phosphate + phosphate</text>
        <dbReference type="Rhea" id="RHEA:14053"/>
        <dbReference type="ChEBI" id="CHEBI:15377"/>
        <dbReference type="ChEBI" id="CHEBI:43474"/>
        <dbReference type="ChEBI" id="CHEBI:57693"/>
        <dbReference type="ChEBI" id="CHEBI:58702"/>
        <dbReference type="ChEBI" id="CHEBI:85985"/>
        <dbReference type="EC" id="2.5.1.55"/>
    </reaction>
</comment>
<comment type="pathway">
    <text evidence="1">Carbohydrate biosynthesis; 3-deoxy-D-manno-octulosonate biosynthesis; 3-deoxy-D-manno-octulosonate from D-ribulose 5-phosphate: step 2/3.</text>
</comment>
<comment type="pathway">
    <text evidence="1">Bacterial outer membrane biogenesis; lipopolysaccharide biosynthesis.</text>
</comment>
<comment type="subcellular location">
    <subcellularLocation>
        <location evidence="1">Cytoplasm</location>
    </subcellularLocation>
</comment>
<comment type="similarity">
    <text evidence="1">Belongs to the KdsA family.</text>
</comment>
<feature type="chain" id="PRO_0000304434" description="2-dehydro-3-deoxyphosphooctonate aldolase">
    <location>
        <begin position="1"/>
        <end position="287"/>
    </location>
</feature>
<sequence>MNAPISAAPVVTAGSVRFGNQLPLAVIAGPCQLESRGHALEVASALKEIATRLNISLVYKTSFDKANRTSGSAARGLGLAQSLPIFAEIRSSLGLPVLTDVHDASQCAEVAQAVDILQIPAFLCRQTDLLLAAAATGKVVNVKKGQFLAPWDMANVVAKITGAGNPNVLATERGVSFGYNTLISDMRSLPIMAKTTGAPVIFDATHSVQQPGGQGTSSGGQREFVPVLARAAVAVGVAGVFIETHPDPDHAPSDGPNMVPLAQFEGLLRTLMAFDALAKGQAADAIR</sequence>
<keyword id="KW-0963">Cytoplasm</keyword>
<keyword id="KW-0448">Lipopolysaccharide biosynthesis</keyword>
<keyword id="KW-1185">Reference proteome</keyword>
<keyword id="KW-0808">Transferase</keyword>
<reference key="1">
    <citation type="journal article" date="2007" name="Science">
        <title>Legumes symbioses: absence of nod genes in photosynthetic bradyrhizobia.</title>
        <authorList>
            <person name="Giraud E."/>
            <person name="Moulin L."/>
            <person name="Vallenet D."/>
            <person name="Barbe V."/>
            <person name="Cytryn E."/>
            <person name="Avarre J.-C."/>
            <person name="Jaubert M."/>
            <person name="Simon D."/>
            <person name="Cartieaux F."/>
            <person name="Prin Y."/>
            <person name="Bena G."/>
            <person name="Hannibal L."/>
            <person name="Fardoux J."/>
            <person name="Kojadinovic M."/>
            <person name="Vuillet L."/>
            <person name="Lajus A."/>
            <person name="Cruveiller S."/>
            <person name="Rouy Z."/>
            <person name="Mangenot S."/>
            <person name="Segurens B."/>
            <person name="Dossat C."/>
            <person name="Franck W.L."/>
            <person name="Chang W.-S."/>
            <person name="Saunders E."/>
            <person name="Bruce D."/>
            <person name="Richardson P."/>
            <person name="Normand P."/>
            <person name="Dreyfus B."/>
            <person name="Pignol D."/>
            <person name="Stacey G."/>
            <person name="Emerich D."/>
            <person name="Vermeglio A."/>
            <person name="Medigue C."/>
            <person name="Sadowsky M."/>
        </authorList>
    </citation>
    <scope>NUCLEOTIDE SEQUENCE [LARGE SCALE GENOMIC DNA]</scope>
    <source>
        <strain>ORS 278</strain>
    </source>
</reference>
<proteinExistence type="inferred from homology"/>
<protein>
    <recommendedName>
        <fullName evidence="1">2-dehydro-3-deoxyphosphooctonate aldolase</fullName>
        <ecNumber evidence="1">2.5.1.55</ecNumber>
    </recommendedName>
    <alternativeName>
        <fullName evidence="1">3-deoxy-D-manno-octulosonic acid 8-phosphate synthase</fullName>
    </alternativeName>
    <alternativeName>
        <fullName evidence="1">KDO-8-phosphate synthase</fullName>
        <shortName evidence="1">KDO 8-P synthase</shortName>
        <shortName evidence="1">KDOPS</shortName>
    </alternativeName>
    <alternativeName>
        <fullName evidence="1">Phospho-2-dehydro-3-deoxyoctonate aldolase</fullName>
    </alternativeName>
</protein>
<dbReference type="EC" id="2.5.1.55" evidence="1"/>
<dbReference type="EMBL" id="CU234118">
    <property type="protein sequence ID" value="CAL77853.1"/>
    <property type="molecule type" value="Genomic_DNA"/>
</dbReference>
<dbReference type="RefSeq" id="WP_011926983.1">
    <property type="nucleotide sequence ID" value="NC_009445.1"/>
</dbReference>
<dbReference type="SMR" id="A4YVC7"/>
<dbReference type="STRING" id="114615.BRADO4101"/>
<dbReference type="KEGG" id="bra:BRADO4101"/>
<dbReference type="eggNOG" id="COG2877">
    <property type="taxonomic scope" value="Bacteria"/>
</dbReference>
<dbReference type="HOGENOM" id="CLU_036666_0_0_5"/>
<dbReference type="OrthoDB" id="9776934at2"/>
<dbReference type="UniPathway" id="UPA00030"/>
<dbReference type="UniPathway" id="UPA00357">
    <property type="reaction ID" value="UER00474"/>
</dbReference>
<dbReference type="Proteomes" id="UP000001994">
    <property type="component" value="Chromosome"/>
</dbReference>
<dbReference type="GO" id="GO:0005737">
    <property type="term" value="C:cytoplasm"/>
    <property type="evidence" value="ECO:0007669"/>
    <property type="project" value="UniProtKB-SubCell"/>
</dbReference>
<dbReference type="GO" id="GO:0008676">
    <property type="term" value="F:3-deoxy-8-phosphooctulonate synthase activity"/>
    <property type="evidence" value="ECO:0007669"/>
    <property type="project" value="UniProtKB-UniRule"/>
</dbReference>
<dbReference type="GO" id="GO:0019294">
    <property type="term" value="P:keto-3-deoxy-D-manno-octulosonic acid biosynthetic process"/>
    <property type="evidence" value="ECO:0007669"/>
    <property type="project" value="UniProtKB-UniRule"/>
</dbReference>
<dbReference type="Gene3D" id="3.20.20.70">
    <property type="entry name" value="Aldolase class I"/>
    <property type="match status" value="1"/>
</dbReference>
<dbReference type="HAMAP" id="MF_00056">
    <property type="entry name" value="KDO8P_synth"/>
    <property type="match status" value="1"/>
</dbReference>
<dbReference type="InterPro" id="IPR013785">
    <property type="entry name" value="Aldolase_TIM"/>
</dbReference>
<dbReference type="InterPro" id="IPR006218">
    <property type="entry name" value="DAHP1/KDSA"/>
</dbReference>
<dbReference type="InterPro" id="IPR006269">
    <property type="entry name" value="KDO8P_synthase"/>
</dbReference>
<dbReference type="NCBIfam" id="TIGR01362">
    <property type="entry name" value="KDO8P_synth"/>
    <property type="match status" value="1"/>
</dbReference>
<dbReference type="NCBIfam" id="NF003543">
    <property type="entry name" value="PRK05198.1"/>
    <property type="match status" value="1"/>
</dbReference>
<dbReference type="PANTHER" id="PTHR21057">
    <property type="entry name" value="PHOSPHO-2-DEHYDRO-3-DEOXYHEPTONATE ALDOLASE"/>
    <property type="match status" value="1"/>
</dbReference>
<dbReference type="Pfam" id="PF00793">
    <property type="entry name" value="DAHP_synth_1"/>
    <property type="match status" value="1"/>
</dbReference>
<dbReference type="SUPFAM" id="SSF51569">
    <property type="entry name" value="Aldolase"/>
    <property type="match status" value="1"/>
</dbReference>
<accession>A4YVC7</accession>
<name>KDSA_BRASO</name>